<accession>Q40392</accession>
<protein>
    <recommendedName>
        <fullName>TMV resistance protein N</fullName>
        <ecNumber evidence="2">3.2.2.6</ecNumber>
    </recommendedName>
</protein>
<sequence>MASSSSSSRWSYDVFLSFRGEDTRKTFTSHLYEVLNDKGIKTFQDDKRLEYGATIPGELCKAIEESQFAIVVFSENYATSRWCLNELVKIMECKTRFKQTVIPIFYDVDPSHVRNQKESFAKAFEEHETKYKDDVEGIQRWRIALNEAANLKGSCDNRDKTDADCIRQIVDQISSKLCKISLSYLQNIVGIDTHLEKIESLLEIGINGVRIMGIWGMGGVGKTTIARAIFDTLLGRMDSSYQFDGACFLKDIKENKRGMHSLQNALLSELLREKANYNNEEDGKHQMASRLRSKKVLIVLDDIDNKDHYLEYLAGDLDWFGNGSRIIITTRDKHLIEKNDIIYEVTALPDHESIQLFKQHAFGKEVPNENFEKLSLEVVNYAKGLPLALKVWGSLLHNLRLTEWKSAIEHMKNNSYSGIIDKLKISYDGLEPKQQEMFLDIACFLRGEEKDYILQILESCHIGAEYGLRILIDKSLVFISEYNQVQMHDLIQDMGKYIVNFQKDPGERSRLWLAKEVEEVMSNNTGTMAMEAIWVSSYSSTLRFSNQAVKNMKRLRVFNMGRSSTHYAIDYLPNNLRCFVCTNYPWESFPSTFELKMLVHLQLRHNSLRHLWTETKHLPSLRRIDLSWSKRLTRTPDFTGMPNLEYVNLYQCSNLEEVHHSLGCCSKVIGLYLNDCKSLKRFPCVNVESLEYLGLRSCDSLEKLPEIYGRMKPEIQIHMQGSGIRELPSSIFQYKTHVTKLLLWNMKNLVALPSSICRLKSLVSLSVSGCSKLESLPEEIGDLDNLRVFDASDTLILRPPSSIIRLNKLIILMFRGFKDGVHFEFPPVAEGLHSLEYLNLSYCNLIDGGLPEEIGSLSSLKKLDLSRNNFEHLPSSIAQLGALQSLDLKDCQRLTQLPELPPELNELHVDCHMALKFIHYLVTKRKKLHRVKLDDAHNDTMYNLFAYTMFQNISSMRHDISASDSLSLTVFTGQPYPEKIPSWFHHQGWDSSVSVNLPENWYIPDKFLGFAVCYSRSLIDTTAHLIPVCDDKMSRMTQKLALSECDTESSNYSEWDIHFFFVPFAGLWDTSKANGKTPNDYGIIRLSFSGEEKMYGLRLLYKEGPEVNALLQMRENSNEPTEHSTGIRRTQYNNRTSFYELING</sequence>
<proteinExistence type="evidence at protein level"/>
<name>TMVRN_NICGU</name>
<evidence type="ECO:0000255" key="1"/>
<evidence type="ECO:0000255" key="2">
    <source>
        <dbReference type="PROSITE-ProRule" id="PRU00204"/>
    </source>
</evidence>
<evidence type="ECO:0000269" key="3">
    <source>
    </source>
</evidence>
<evidence type="ECO:0000269" key="4">
    <source>
    </source>
</evidence>
<evidence type="ECO:0000305" key="5"/>
<dbReference type="EC" id="3.2.2.6" evidence="2"/>
<dbReference type="EMBL" id="U15605">
    <property type="protein sequence ID" value="AAA50763.1"/>
    <property type="molecule type" value="Genomic_DNA"/>
</dbReference>
<dbReference type="PIR" id="A54810">
    <property type="entry name" value="A54810"/>
</dbReference>
<dbReference type="SMR" id="Q40392"/>
<dbReference type="IntAct" id="Q40392">
    <property type="interactions" value="1"/>
</dbReference>
<dbReference type="GO" id="GO:0005737">
    <property type="term" value="C:cytoplasm"/>
    <property type="evidence" value="ECO:0007669"/>
    <property type="project" value="UniProtKB-SubCell"/>
</dbReference>
<dbReference type="GO" id="GO:0043531">
    <property type="term" value="F:ADP binding"/>
    <property type="evidence" value="ECO:0007669"/>
    <property type="project" value="InterPro"/>
</dbReference>
<dbReference type="GO" id="GO:0005524">
    <property type="term" value="F:ATP binding"/>
    <property type="evidence" value="ECO:0007669"/>
    <property type="project" value="UniProtKB-KW"/>
</dbReference>
<dbReference type="GO" id="GO:0061809">
    <property type="term" value="F:NAD+ nucleosidase activity, cyclic ADP-ribose generating"/>
    <property type="evidence" value="ECO:0007669"/>
    <property type="project" value="UniProtKB-EC"/>
</dbReference>
<dbReference type="GO" id="GO:0009626">
    <property type="term" value="P:plant-type hypersensitive response"/>
    <property type="evidence" value="ECO:0007669"/>
    <property type="project" value="UniProtKB-KW"/>
</dbReference>
<dbReference type="GO" id="GO:0007165">
    <property type="term" value="P:signal transduction"/>
    <property type="evidence" value="ECO:0007669"/>
    <property type="project" value="InterPro"/>
</dbReference>
<dbReference type="FunFam" id="3.40.50.10140:FF:000007">
    <property type="entry name" value="Disease resistance protein (TIR-NBS-LRR class)"/>
    <property type="match status" value="1"/>
</dbReference>
<dbReference type="Gene3D" id="1.10.8.430">
    <property type="entry name" value="Helical domain of apoptotic protease-activating factors"/>
    <property type="match status" value="1"/>
</dbReference>
<dbReference type="Gene3D" id="3.40.50.300">
    <property type="entry name" value="P-loop containing nucleotide triphosphate hydrolases"/>
    <property type="match status" value="1"/>
</dbReference>
<dbReference type="Gene3D" id="3.80.10.10">
    <property type="entry name" value="Ribonuclease Inhibitor"/>
    <property type="match status" value="2"/>
</dbReference>
<dbReference type="Gene3D" id="3.40.50.10140">
    <property type="entry name" value="Toll/interleukin-1 receptor homology (TIR) domain"/>
    <property type="match status" value="1"/>
</dbReference>
<dbReference type="InterPro" id="IPR042197">
    <property type="entry name" value="Apaf_helical"/>
</dbReference>
<dbReference type="InterPro" id="IPR045344">
    <property type="entry name" value="C-JID"/>
</dbReference>
<dbReference type="InterPro" id="IPR044974">
    <property type="entry name" value="Disease_R_plants"/>
</dbReference>
<dbReference type="InterPro" id="IPR001611">
    <property type="entry name" value="Leu-rich_rpt"/>
</dbReference>
<dbReference type="InterPro" id="IPR003591">
    <property type="entry name" value="Leu-rich_rpt_typical-subtyp"/>
</dbReference>
<dbReference type="InterPro" id="IPR032675">
    <property type="entry name" value="LRR_dom_sf"/>
</dbReference>
<dbReference type="InterPro" id="IPR055414">
    <property type="entry name" value="LRR_R13L4/SHOC2-like"/>
</dbReference>
<dbReference type="InterPro" id="IPR002182">
    <property type="entry name" value="NB-ARC"/>
</dbReference>
<dbReference type="InterPro" id="IPR027417">
    <property type="entry name" value="P-loop_NTPase"/>
</dbReference>
<dbReference type="InterPro" id="IPR000157">
    <property type="entry name" value="TIR_dom"/>
</dbReference>
<dbReference type="InterPro" id="IPR035897">
    <property type="entry name" value="Toll_tir_struct_dom_sf"/>
</dbReference>
<dbReference type="PANTHER" id="PTHR11017:SF393">
    <property type="entry name" value="ADP-RIBOSYL CYCLASE_CYCLIC ADP-RIBOSE HYDROLASE"/>
    <property type="match status" value="1"/>
</dbReference>
<dbReference type="PANTHER" id="PTHR11017">
    <property type="entry name" value="LEUCINE-RICH REPEAT-CONTAINING PROTEIN"/>
    <property type="match status" value="1"/>
</dbReference>
<dbReference type="Pfam" id="PF20160">
    <property type="entry name" value="C-JID"/>
    <property type="match status" value="1"/>
</dbReference>
<dbReference type="Pfam" id="PF23286">
    <property type="entry name" value="LRR_13"/>
    <property type="match status" value="1"/>
</dbReference>
<dbReference type="Pfam" id="PF23598">
    <property type="entry name" value="LRR_14"/>
    <property type="match status" value="1"/>
</dbReference>
<dbReference type="Pfam" id="PF00931">
    <property type="entry name" value="NB-ARC"/>
    <property type="match status" value="1"/>
</dbReference>
<dbReference type="Pfam" id="PF01582">
    <property type="entry name" value="TIR"/>
    <property type="match status" value="1"/>
</dbReference>
<dbReference type="Pfam" id="PF23282">
    <property type="entry name" value="WHD_ROQ1"/>
    <property type="match status" value="1"/>
</dbReference>
<dbReference type="PRINTS" id="PR00364">
    <property type="entry name" value="DISEASERSIST"/>
</dbReference>
<dbReference type="SMART" id="SM00369">
    <property type="entry name" value="LRR_TYP"/>
    <property type="match status" value="4"/>
</dbReference>
<dbReference type="SMART" id="SM00255">
    <property type="entry name" value="TIR"/>
    <property type="match status" value="1"/>
</dbReference>
<dbReference type="SUPFAM" id="SSF52058">
    <property type="entry name" value="L domain-like"/>
    <property type="match status" value="2"/>
</dbReference>
<dbReference type="SUPFAM" id="SSF52540">
    <property type="entry name" value="P-loop containing nucleoside triphosphate hydrolases"/>
    <property type="match status" value="1"/>
</dbReference>
<dbReference type="SUPFAM" id="SSF52200">
    <property type="entry name" value="Toll/Interleukin receptor TIR domain"/>
    <property type="match status" value="1"/>
</dbReference>
<dbReference type="PROSITE" id="PS51450">
    <property type="entry name" value="LRR"/>
    <property type="match status" value="4"/>
</dbReference>
<dbReference type="PROSITE" id="PS50104">
    <property type="entry name" value="TIR"/>
    <property type="match status" value="1"/>
</dbReference>
<comment type="function">
    <text>Disease resistance protein. Resistance proteins guard the plant against pathogens that contain an appropriate avirulence protein via a direct or indirect interaction with this avirulence protein. That triggers a defense system including the hypersensitive response, which restricts the pathogen growth.</text>
</comment>
<comment type="catalytic activity">
    <reaction evidence="2">
        <text>NAD(+) + H2O = ADP-D-ribose + nicotinamide + H(+)</text>
        <dbReference type="Rhea" id="RHEA:16301"/>
        <dbReference type="ChEBI" id="CHEBI:15377"/>
        <dbReference type="ChEBI" id="CHEBI:15378"/>
        <dbReference type="ChEBI" id="CHEBI:17154"/>
        <dbReference type="ChEBI" id="CHEBI:57540"/>
        <dbReference type="ChEBI" id="CHEBI:57967"/>
        <dbReference type="EC" id="3.2.2.6"/>
    </reaction>
    <physiologicalReaction direction="left-to-right" evidence="2">
        <dbReference type="Rhea" id="RHEA:16302"/>
    </physiologicalReaction>
</comment>
<comment type="interaction">
    <interactant intactId="EBI-1804401">
        <id>Q40392</id>
    </interactant>
    <interactant intactId="EBI-1809509">
        <id>B2C7Y6</id>
        <label>NRIP1</label>
    </interactant>
    <organismsDiffer>true</organismsDiffer>
    <experiments>3</experiments>
</comment>
<comment type="subcellular location">
    <subcellularLocation>
        <location evidence="5">Cytoplasm</location>
    </subcellularLocation>
</comment>
<comment type="alternative products">
    <event type="alternative splicing"/>
    <isoform>
        <id>Q40392-1</id>
        <name>1</name>
        <name>N</name>
        <name>Ns</name>
        <sequence type="displayed"/>
    </isoform>
    <isoform>
        <id>Q40392-2</id>
        <name>2</name>
        <name>Ntr</name>
        <name>Nl</name>
        <sequence type="described" ref="VSP_010126 VSP_010127"/>
    </isoform>
</comment>
<comment type="developmental stage">
    <text evidence="3">Isoform 1 is more prevalent before and for 3 hours after tobacco mosaic virus (TMV) infection, while isoform 2 is more prevalent 4 to 8 hours after TMV infection.</text>
</comment>
<comment type="domain">
    <text evidence="2">The TIR domain mediates NAD(+) hydrolase (NADase) activity. Self-association of TIR domains is required for NADase activity.</text>
</comment>
<comment type="miscellaneous">
    <text>Isoform 1 and isoform 2 are necessary to confer complete resistance to TMV.</text>
</comment>
<comment type="similarity">
    <text evidence="5">Belongs to the disease resistance NB-LRR family.</text>
</comment>
<feature type="chain" id="PRO_0000212781" description="TMV resistance protein N">
    <location>
        <begin position="1"/>
        <end position="1144"/>
    </location>
</feature>
<feature type="domain" description="TIR" evidence="2">
    <location>
        <begin position="10"/>
        <end position="177"/>
    </location>
</feature>
<feature type="domain" description="NB-ARC">
    <location>
        <begin position="172"/>
        <end position="447"/>
    </location>
</feature>
<feature type="repeat" description="LRR 1">
    <location>
        <begin position="597"/>
        <end position="618"/>
    </location>
</feature>
<feature type="repeat" description="LRR 2">
    <location>
        <begin position="620"/>
        <end position="642"/>
    </location>
</feature>
<feature type="repeat" description="LRR 3">
    <location>
        <begin position="643"/>
        <end position="665"/>
    </location>
</feature>
<feature type="repeat" description="LRR 4">
    <location>
        <begin position="834"/>
        <end position="854"/>
    </location>
</feature>
<feature type="repeat" description="LRR 5">
    <location>
        <begin position="859"/>
        <end position="880"/>
    </location>
</feature>
<feature type="repeat" description="LRR 6">
    <location>
        <begin position="882"/>
        <end position="904"/>
    </location>
</feature>
<feature type="active site" evidence="2">
    <location>
        <position position="86"/>
    </location>
</feature>
<feature type="binding site" evidence="1">
    <location>
        <begin position="216"/>
        <end position="223"/>
    </location>
    <ligand>
        <name>ATP</name>
        <dbReference type="ChEBI" id="CHEBI:30616"/>
    </ligand>
</feature>
<feature type="splice variant" id="VSP_010126" description="In isoform 2." evidence="5">
    <original>HLPSLRRIDLSWSKRLTRTPDFTGMPNLEYVNLYQC</original>
    <variation>KKNNIAEKEGDGILIEFWGDLQWAFAVSTEDRSQLV</variation>
    <location>
        <begin position="617"/>
        <end position="652"/>
    </location>
</feature>
<feature type="splice variant" id="VSP_010127" description="In isoform 2." evidence="5">
    <location>
        <begin position="653"/>
        <end position="1144"/>
    </location>
</feature>
<feature type="mutagenesis site" description="Partial loss of resistance.">
    <original>Y</original>
    <variation>S</variation>
    <variation>F</variation>
    <location>
        <position position="12"/>
    </location>
</feature>
<feature type="mutagenesis site" description="Loss of resistance." evidence="4">
    <original>D</original>
    <variation>H</variation>
    <location>
        <position position="46"/>
    </location>
</feature>
<feature type="mutagenesis site" description="No effect." evidence="4">
    <original>D</original>
    <variation>Y</variation>
    <location>
        <position position="46"/>
    </location>
</feature>
<feature type="mutagenesis site" description="Loss of resistance." evidence="4">
    <original>I</original>
    <variation>M</variation>
    <location>
        <position position="63"/>
    </location>
</feature>
<feature type="mutagenesis site" description="No effect." evidence="4">
    <original>I</original>
    <variation>V</variation>
    <location>
        <position position="63"/>
    </location>
</feature>
<feature type="mutagenesis site" description="No effect." evidence="4">
    <original>S</original>
    <variation>A</variation>
    <location>
        <position position="66"/>
    </location>
</feature>
<feature type="mutagenesis site" description="Partial loss of resistance." evidence="4">
    <original>Q</original>
    <variation>E</variation>
    <variation>K</variation>
    <location>
        <position position="67"/>
    </location>
</feature>
<feature type="mutagenesis site" description="Partial loss of resistance." evidence="4">
    <original>W</original>
    <variation>S</variation>
    <variation>A</variation>
    <location>
        <position position="82"/>
    </location>
</feature>
<feature type="mutagenesis site" description="Partial loss of resistance." evidence="4">
    <original>I</original>
    <variation>V</variation>
    <variation>F</variation>
    <location>
        <position position="138"/>
    </location>
</feature>
<feature type="mutagenesis site" description="Partial loss of resistance." evidence="4">
    <original>W</original>
    <variation>S</variation>
    <variation>A</variation>
    <location>
        <position position="141"/>
    </location>
</feature>
<feature type="mutagenesis site" description="Partial loss of resistance." evidence="4">
    <original>R</original>
    <variation>K</variation>
    <variation>S</variation>
    <location>
        <position position="142"/>
    </location>
</feature>
<feature type="mutagenesis site" description="Loss of resistance." evidence="4">
    <original>G</original>
    <variation>A</variation>
    <variation>E</variation>
    <variation>V</variation>
    <variation>R</variation>
    <location>
        <position position="216"/>
    </location>
</feature>
<feature type="mutagenesis site" description="No effect." evidence="4">
    <original>G</original>
    <variation>P</variation>
    <location>
        <position position="218"/>
    </location>
</feature>
<feature type="mutagenesis site" description="Loss of resistance." evidence="4">
    <original>G</original>
    <variation>R</variation>
    <location>
        <position position="218"/>
    </location>
</feature>
<feature type="mutagenesis site" description="Partial loss of resistance." evidence="4">
    <original>G</original>
    <variation>V</variation>
    <variation>S</variation>
    <location>
        <position position="218"/>
    </location>
</feature>
<feature type="mutagenesis site" description="Loss of resistance." evidence="4">
    <original>G</original>
    <variation>D</variation>
    <location>
        <position position="219"/>
    </location>
</feature>
<feature type="mutagenesis site" description="Partial loss of resistance." evidence="4">
    <original>G</original>
    <variation>V</variation>
    <location>
        <position position="219"/>
    </location>
</feature>
<feature type="mutagenesis site" description="Loss of resistance." evidence="4">
    <original>K</original>
    <variation>E</variation>
    <variation>N</variation>
    <location>
        <position position="222"/>
    </location>
</feature>
<feature type="mutagenesis site" description="Loss of resistance." evidence="4">
    <original>T</original>
    <variation>A</variation>
    <variation>N</variation>
    <location>
        <position position="223"/>
    </location>
</feature>
<feature type="mutagenesis site" description="Partial loss of resistance." evidence="4">
    <original>T</original>
    <variation>S</variation>
    <location>
        <position position="223"/>
    </location>
</feature>
<feature type="mutagenesis site" description="Loss of resistance." evidence="4">
    <original>D</original>
    <variation>H</variation>
    <variation>N</variation>
    <variation>Y</variation>
    <location>
        <position position="301"/>
    </location>
</feature>
<feature type="mutagenesis site" description="Loss of resistance." evidence="4">
    <original>R</original>
    <variation>Y</variation>
    <variation>G</variation>
    <location>
        <position position="325"/>
    </location>
</feature>
<feature type="mutagenesis site" description="Partial loss of resistance." evidence="4">
    <original>P</original>
    <variation>A</variation>
    <variation>T</variation>
    <location>
        <position position="619"/>
    </location>
</feature>
<feature type="mutagenesis site" description="Loss of resistance." evidence="4">
    <original>P</original>
    <variation>S</variation>
    <location>
        <position position="619"/>
    </location>
</feature>
<gene>
    <name type="primary">N</name>
</gene>
<organism>
    <name type="scientific">Nicotiana glutinosa</name>
    <name type="common">Tobacco</name>
    <dbReference type="NCBI Taxonomy" id="35889"/>
    <lineage>
        <taxon>Eukaryota</taxon>
        <taxon>Viridiplantae</taxon>
        <taxon>Streptophyta</taxon>
        <taxon>Embryophyta</taxon>
        <taxon>Tracheophyta</taxon>
        <taxon>Spermatophyta</taxon>
        <taxon>Magnoliopsida</taxon>
        <taxon>eudicotyledons</taxon>
        <taxon>Gunneridae</taxon>
        <taxon>Pentapetalae</taxon>
        <taxon>asterids</taxon>
        <taxon>lamiids</taxon>
        <taxon>Solanales</taxon>
        <taxon>Solanaceae</taxon>
        <taxon>Nicotianoideae</taxon>
        <taxon>Nicotianeae</taxon>
        <taxon>Nicotiana</taxon>
    </lineage>
</organism>
<keyword id="KW-0025">Alternative splicing</keyword>
<keyword id="KW-0067">ATP-binding</keyword>
<keyword id="KW-0963">Cytoplasm</keyword>
<keyword id="KW-0378">Hydrolase</keyword>
<keyword id="KW-0381">Hypersensitive response</keyword>
<keyword id="KW-0433">Leucine-rich repeat</keyword>
<keyword id="KW-0520">NAD</keyword>
<keyword id="KW-0547">Nucleotide-binding</keyword>
<keyword id="KW-0611">Plant defense</keyword>
<keyword id="KW-0677">Repeat</keyword>
<reference key="1">
    <citation type="journal article" date="1994" name="Cell">
        <title>The product of the tobacco mosaic virus resistance gene N: similarity to toll and the interleukin-1 receptor.</title>
        <authorList>
            <person name="Whitham S."/>
            <person name="Dinesh-Kumar S.P."/>
            <person name="Choi D."/>
            <person name="Hehl R."/>
            <person name="Corr C."/>
            <person name="Baker B.J."/>
        </authorList>
    </citation>
    <scope>NUCLEOTIDE SEQUENCE [GENOMIC DNA]</scope>
    <scope>ALTERNATIVE SPLICING</scope>
</reference>
<reference key="2">
    <citation type="journal article" date="2000" name="Proc. Natl. Acad. Sci. U.S.A.">
        <title>Alternatively spliced N resistance gene transcripts: their possible role in tobacco mosaic virus resistance.</title>
        <authorList>
            <person name="Dinesh-Kumar S.P."/>
            <person name="Baker B.J."/>
        </authorList>
    </citation>
    <scope>NUCLEOTIDE SEQUENCE [GENOMIC DNA] (ISOFORMS 1 AND 2)</scope>
    <scope>DEVELOPMENTAL STAGE</scope>
</reference>
<reference key="3">
    <citation type="journal article" date="2000" name="Proc. Natl. Acad. Sci. U.S.A.">
        <title>Structure-function analysis of the tobacco mosaic virus resistance gene N.</title>
        <authorList>
            <person name="Dinesh-Kumar S.P."/>
            <person name="Tham W.H."/>
            <person name="Baker B.J."/>
        </authorList>
    </citation>
    <scope>MUTAGENESIS OF ASP-46; ILE-63; SER-66; GLN-67; TRP-82; ILE-138; TRP-141; ARG-142; GLY-216; GLY-218; GLY-219; LYS-222; THR-223; ASP-301; ARG-325 AND PRO-619</scope>
</reference>